<dbReference type="EMBL" id="CP000647">
    <property type="protein sequence ID" value="ABR79595.1"/>
    <property type="molecule type" value="Genomic_DNA"/>
</dbReference>
<dbReference type="RefSeq" id="WP_002882892.1">
    <property type="nucleotide sequence ID" value="NC_009648.1"/>
</dbReference>
<dbReference type="STRING" id="272620.KPN_04216"/>
<dbReference type="PaxDb" id="272620-KPN_04216"/>
<dbReference type="EnsemblBacteria" id="ABR79595">
    <property type="protein sequence ID" value="ABR79595"/>
    <property type="gene ID" value="KPN_04216"/>
</dbReference>
<dbReference type="GeneID" id="69757902"/>
<dbReference type="KEGG" id="kpn:KPN_04216"/>
<dbReference type="HOGENOM" id="CLU_066437_0_0_6"/>
<dbReference type="Proteomes" id="UP000000265">
    <property type="component" value="Chromosome"/>
</dbReference>
<dbReference type="GO" id="GO:0005886">
    <property type="term" value="C:plasma membrane"/>
    <property type="evidence" value="ECO:0007669"/>
    <property type="project" value="UniProtKB-SubCell"/>
</dbReference>
<dbReference type="GO" id="GO:0015153">
    <property type="term" value="F:rhamnose transmembrane transporter activity"/>
    <property type="evidence" value="ECO:0007669"/>
    <property type="project" value="UniProtKB-UniRule"/>
</dbReference>
<dbReference type="GO" id="GO:0015293">
    <property type="term" value="F:symporter activity"/>
    <property type="evidence" value="ECO:0007669"/>
    <property type="project" value="UniProtKB-KW"/>
</dbReference>
<dbReference type="HAMAP" id="MF_01532">
    <property type="entry name" value="RhaT"/>
    <property type="match status" value="1"/>
</dbReference>
<dbReference type="InterPro" id="IPR004673">
    <property type="entry name" value="L-rhamnose-proton_sym_RhaT"/>
</dbReference>
<dbReference type="NCBIfam" id="NF010021">
    <property type="entry name" value="PRK13499.1-1"/>
    <property type="match status" value="1"/>
</dbReference>
<dbReference type="NCBIfam" id="NF010023">
    <property type="entry name" value="PRK13499.1-3"/>
    <property type="match status" value="1"/>
</dbReference>
<dbReference type="NCBIfam" id="TIGR00776">
    <property type="entry name" value="RhaT"/>
    <property type="match status" value="1"/>
</dbReference>
<dbReference type="Pfam" id="PF06379">
    <property type="entry name" value="RhaT"/>
    <property type="match status" value="1"/>
</dbReference>
<proteinExistence type="inferred from homology"/>
<keyword id="KW-0997">Cell inner membrane</keyword>
<keyword id="KW-1003">Cell membrane</keyword>
<keyword id="KW-0472">Membrane</keyword>
<keyword id="KW-0762">Sugar transport</keyword>
<keyword id="KW-0769">Symport</keyword>
<keyword id="KW-0812">Transmembrane</keyword>
<keyword id="KW-1133">Transmembrane helix</keyword>
<keyword id="KW-0813">Transport</keyword>
<feature type="chain" id="PRO_1000068693" description="L-rhamnose-proton symporter">
    <location>
        <begin position="1"/>
        <end position="344"/>
    </location>
</feature>
<feature type="transmembrane region" description="Helical" evidence="1">
    <location>
        <begin position="4"/>
        <end position="24"/>
    </location>
</feature>
<feature type="transmembrane region" description="Helical" evidence="1">
    <location>
        <begin position="38"/>
        <end position="58"/>
    </location>
</feature>
<feature type="transmembrane region" description="Helical" evidence="1">
    <location>
        <begin position="68"/>
        <end position="88"/>
    </location>
</feature>
<feature type="transmembrane region" description="Helical" evidence="1">
    <location>
        <begin position="101"/>
        <end position="121"/>
    </location>
</feature>
<feature type="transmembrane region" description="Helical" evidence="1">
    <location>
        <begin position="131"/>
        <end position="151"/>
    </location>
</feature>
<feature type="transmembrane region" description="Helical" evidence="1">
    <location>
        <begin position="175"/>
        <end position="195"/>
    </location>
</feature>
<feature type="transmembrane region" description="Helical" evidence="1">
    <location>
        <begin position="214"/>
        <end position="234"/>
    </location>
</feature>
<feature type="transmembrane region" description="Helical" evidence="1">
    <location>
        <begin position="259"/>
        <end position="279"/>
    </location>
</feature>
<feature type="transmembrane region" description="Helical" evidence="1">
    <location>
        <begin position="290"/>
        <end position="310"/>
    </location>
</feature>
<feature type="transmembrane region" description="Helical" evidence="1">
    <location>
        <begin position="323"/>
        <end position="343"/>
    </location>
</feature>
<reference key="1">
    <citation type="submission" date="2006-09" db="EMBL/GenBank/DDBJ databases">
        <authorList>
            <consortium name="The Klebsiella pneumonia Genome Sequencing Project"/>
            <person name="McClelland M."/>
            <person name="Sanderson E.K."/>
            <person name="Spieth J."/>
            <person name="Clifton W.S."/>
            <person name="Latreille P."/>
            <person name="Sabo A."/>
            <person name="Pepin K."/>
            <person name="Bhonagiri V."/>
            <person name="Porwollik S."/>
            <person name="Ali J."/>
            <person name="Wilson R.K."/>
        </authorList>
    </citation>
    <scope>NUCLEOTIDE SEQUENCE [LARGE SCALE GENOMIC DNA]</scope>
    <source>
        <strain>ATCC 700721 / MGH 78578</strain>
    </source>
</reference>
<name>RHAT_KLEP7</name>
<protein>
    <recommendedName>
        <fullName evidence="1">L-rhamnose-proton symporter</fullName>
    </recommendedName>
    <alternativeName>
        <fullName evidence="1">L-rhamnose-H(+) transport protein</fullName>
    </alternativeName>
</protein>
<evidence type="ECO:0000255" key="1">
    <source>
        <dbReference type="HAMAP-Rule" id="MF_01532"/>
    </source>
</evidence>
<organism>
    <name type="scientific">Klebsiella pneumoniae subsp. pneumoniae (strain ATCC 700721 / MGH 78578)</name>
    <dbReference type="NCBI Taxonomy" id="272620"/>
    <lineage>
        <taxon>Bacteria</taxon>
        <taxon>Pseudomonadati</taxon>
        <taxon>Pseudomonadota</taxon>
        <taxon>Gammaproteobacteria</taxon>
        <taxon>Enterobacterales</taxon>
        <taxon>Enterobacteriaceae</taxon>
        <taxon>Klebsiella/Raoultella group</taxon>
        <taxon>Klebsiella</taxon>
        <taxon>Klebsiella pneumoniae complex</taxon>
    </lineage>
</organism>
<gene>
    <name evidence="1" type="primary">rhaT</name>
    <name type="ordered locus">KPN78578_41710</name>
    <name type="ORF">KPN_04216</name>
</gene>
<accession>A6TGB1</accession>
<comment type="function">
    <text evidence="1">Uptake of L-rhamnose across the cytoplasmic membrane with the concomitant transport of protons into the cell (symport system).</text>
</comment>
<comment type="catalytic activity">
    <reaction evidence="1">
        <text>L-rhamnopyranose(in) + H(+)(in) = L-rhamnopyranose(out) + H(+)(out)</text>
        <dbReference type="Rhea" id="RHEA:29947"/>
        <dbReference type="ChEBI" id="CHEBI:15378"/>
        <dbReference type="ChEBI" id="CHEBI:62346"/>
    </reaction>
    <physiologicalReaction direction="right-to-left" evidence="1">
        <dbReference type="Rhea" id="RHEA:29949"/>
    </physiologicalReaction>
</comment>
<comment type="subcellular location">
    <subcellularLocation>
        <location evidence="1">Cell inner membrane</location>
        <topology evidence="1">Multi-pass membrane protein</topology>
    </subcellularLocation>
</comment>
<comment type="similarity">
    <text evidence="1">Belongs to the L-rhamnose transporter (TC 2.A.7.6) family.</text>
</comment>
<sequence length="344" mass="37142">MNHAITMGIFWHLIGAASAACFYAPFKKVKHWSWETMWSVGGIVSWLILPWAISATLLPDFWAYYRSFSASTLLPVFLFGAMWGIGNINYGLTMRYLGMSMGIGIAIGITLIVGTLMTPIINGQFAVLMHTQGGQMTLLGVLVAVIGVGIVTRAGQLKERKMGIKAEEFNLKKGLLLAVMCGIFSAGMSFAMNAAKPMHDAAAALGVDPLYAALPSYVVIMGGGALVNLGFCFIRLAKVKNLSVKADFSLAKPLIISNLLLSALGGLMWYLQFFFYAWGHASIPAQYDYMSWMLHMSFYVLCGGVVGLVLKEWNNAGRRPVSVLSLGCVVIIIAANIVGLGMAS</sequence>